<sequence>MLTLGLESSCDETACALVDAKGHIMANVVFSQQDHVAYGGIVPELASRAHLRVFPSVVDSALKESGVSLEDIDLIAVTHTPGLIGSLAIGVNFAKGLAIGCQKPIIGVNHVEAHLYAAYMEAENVEFPALGLAVSGAHTAMFLMEDPLTYKLIGKSRDDAIGETFDKVARFLGLPYPGGSLIEKLASCGCEESYSFSPSKVPGCDLSFSGLKTAVLYAIKGNNSNSRTPLPELSEAEKSDIAASFQRAAFTSIAQKLPNIVKKISCRSILVGGGVASNKYFQNLLKNTLNLPLYFPSSKLCTDNAAMIAGLGRELFLSDKSTIGIHPCARYHWESISASLSPLP</sequence>
<name>TSAD_CHLCV</name>
<organism>
    <name type="scientific">Chlamydia caviae (strain ATCC VR-813 / DSM 19441 / 03DC25 / GPIC)</name>
    <name type="common">Chlamydophila caviae</name>
    <dbReference type="NCBI Taxonomy" id="227941"/>
    <lineage>
        <taxon>Bacteria</taxon>
        <taxon>Pseudomonadati</taxon>
        <taxon>Chlamydiota</taxon>
        <taxon>Chlamydiia</taxon>
        <taxon>Chlamydiales</taxon>
        <taxon>Chlamydiaceae</taxon>
        <taxon>Chlamydia/Chlamydophila group</taxon>
        <taxon>Chlamydia</taxon>
    </lineage>
</organism>
<comment type="function">
    <text evidence="1">Required for the formation of a threonylcarbamoyl group on adenosine at position 37 (t(6)A37) in tRNAs that read codons beginning with adenine. Is involved in the transfer of the threonylcarbamoyl moiety of threonylcarbamoyl-AMP (TC-AMP) to the N6 group of A37, together with TsaE and TsaB. TsaD likely plays a direct catalytic role in this reaction.</text>
</comment>
<comment type="catalytic activity">
    <reaction evidence="1">
        <text>L-threonylcarbamoyladenylate + adenosine(37) in tRNA = N(6)-L-threonylcarbamoyladenosine(37) in tRNA + AMP + H(+)</text>
        <dbReference type="Rhea" id="RHEA:37059"/>
        <dbReference type="Rhea" id="RHEA-COMP:10162"/>
        <dbReference type="Rhea" id="RHEA-COMP:10163"/>
        <dbReference type="ChEBI" id="CHEBI:15378"/>
        <dbReference type="ChEBI" id="CHEBI:73682"/>
        <dbReference type="ChEBI" id="CHEBI:74411"/>
        <dbReference type="ChEBI" id="CHEBI:74418"/>
        <dbReference type="ChEBI" id="CHEBI:456215"/>
        <dbReference type="EC" id="2.3.1.234"/>
    </reaction>
</comment>
<comment type="cofactor">
    <cofactor evidence="1">
        <name>Fe(2+)</name>
        <dbReference type="ChEBI" id="CHEBI:29033"/>
    </cofactor>
    <text evidence="1">Binds 1 Fe(2+) ion per subunit.</text>
</comment>
<comment type="subcellular location">
    <subcellularLocation>
        <location evidence="1">Cytoplasm</location>
    </subcellularLocation>
</comment>
<comment type="similarity">
    <text evidence="1">Belongs to the KAE1 / TsaD family.</text>
</comment>
<dbReference type="EC" id="2.3.1.234" evidence="1"/>
<dbReference type="EMBL" id="AE015925">
    <property type="protein sequence ID" value="AAP05285.1"/>
    <property type="molecule type" value="Genomic_DNA"/>
</dbReference>
<dbReference type="RefSeq" id="WP_011006500.1">
    <property type="nucleotide sequence ID" value="NC_003361.3"/>
</dbReference>
<dbReference type="SMR" id="Q822Y4"/>
<dbReference type="STRING" id="227941.CCA_00542"/>
<dbReference type="KEGG" id="cca:CCA_00542"/>
<dbReference type="eggNOG" id="COG0533">
    <property type="taxonomic scope" value="Bacteria"/>
</dbReference>
<dbReference type="HOGENOM" id="CLU_023208_0_2_0"/>
<dbReference type="OrthoDB" id="9806197at2"/>
<dbReference type="Proteomes" id="UP000002193">
    <property type="component" value="Chromosome"/>
</dbReference>
<dbReference type="GO" id="GO:0005737">
    <property type="term" value="C:cytoplasm"/>
    <property type="evidence" value="ECO:0007669"/>
    <property type="project" value="UniProtKB-SubCell"/>
</dbReference>
<dbReference type="GO" id="GO:0005506">
    <property type="term" value="F:iron ion binding"/>
    <property type="evidence" value="ECO:0007669"/>
    <property type="project" value="UniProtKB-UniRule"/>
</dbReference>
<dbReference type="GO" id="GO:0061711">
    <property type="term" value="F:N(6)-L-threonylcarbamoyladenine synthase activity"/>
    <property type="evidence" value="ECO:0007669"/>
    <property type="project" value="UniProtKB-EC"/>
</dbReference>
<dbReference type="GO" id="GO:0002949">
    <property type="term" value="P:tRNA threonylcarbamoyladenosine modification"/>
    <property type="evidence" value="ECO:0007669"/>
    <property type="project" value="UniProtKB-UniRule"/>
</dbReference>
<dbReference type="CDD" id="cd24133">
    <property type="entry name" value="ASKHA_NBD_TsaD_bac"/>
    <property type="match status" value="1"/>
</dbReference>
<dbReference type="FunFam" id="3.30.420.40:FF:000012">
    <property type="entry name" value="tRNA N6-adenosine threonylcarbamoyltransferase"/>
    <property type="match status" value="1"/>
</dbReference>
<dbReference type="Gene3D" id="3.30.420.40">
    <property type="match status" value="2"/>
</dbReference>
<dbReference type="HAMAP" id="MF_01445">
    <property type="entry name" value="TsaD"/>
    <property type="match status" value="1"/>
</dbReference>
<dbReference type="InterPro" id="IPR043129">
    <property type="entry name" value="ATPase_NBD"/>
</dbReference>
<dbReference type="InterPro" id="IPR000905">
    <property type="entry name" value="Gcp-like_dom"/>
</dbReference>
<dbReference type="InterPro" id="IPR017861">
    <property type="entry name" value="KAE1/TsaD"/>
</dbReference>
<dbReference type="InterPro" id="IPR022450">
    <property type="entry name" value="TsaD"/>
</dbReference>
<dbReference type="NCBIfam" id="TIGR00329">
    <property type="entry name" value="gcp_kae1"/>
    <property type="match status" value="1"/>
</dbReference>
<dbReference type="NCBIfam" id="TIGR03723">
    <property type="entry name" value="T6A_TsaD_YgjD"/>
    <property type="match status" value="1"/>
</dbReference>
<dbReference type="PANTHER" id="PTHR11735">
    <property type="entry name" value="TRNA N6-ADENOSINE THREONYLCARBAMOYLTRANSFERASE"/>
    <property type="match status" value="1"/>
</dbReference>
<dbReference type="PANTHER" id="PTHR11735:SF6">
    <property type="entry name" value="TRNA N6-ADENOSINE THREONYLCARBAMOYLTRANSFERASE, MITOCHONDRIAL"/>
    <property type="match status" value="1"/>
</dbReference>
<dbReference type="Pfam" id="PF00814">
    <property type="entry name" value="TsaD"/>
    <property type="match status" value="1"/>
</dbReference>
<dbReference type="PRINTS" id="PR00789">
    <property type="entry name" value="OSIALOPTASE"/>
</dbReference>
<dbReference type="SUPFAM" id="SSF53067">
    <property type="entry name" value="Actin-like ATPase domain"/>
    <property type="match status" value="1"/>
</dbReference>
<keyword id="KW-0012">Acyltransferase</keyword>
<keyword id="KW-0963">Cytoplasm</keyword>
<keyword id="KW-0408">Iron</keyword>
<keyword id="KW-0479">Metal-binding</keyword>
<keyword id="KW-0808">Transferase</keyword>
<keyword id="KW-0819">tRNA processing</keyword>
<reference key="1">
    <citation type="journal article" date="2003" name="Nucleic Acids Res.">
        <title>Genome sequence of Chlamydophila caviae (Chlamydia psittaci GPIC): examining the role of niche-specific genes in the evolution of the Chlamydiaceae.</title>
        <authorList>
            <person name="Read T.D."/>
            <person name="Myers G.S.A."/>
            <person name="Brunham R.C."/>
            <person name="Nelson W.C."/>
            <person name="Paulsen I.T."/>
            <person name="Heidelberg J.F."/>
            <person name="Holtzapple E.K."/>
            <person name="Khouri H.M."/>
            <person name="Federova N.B."/>
            <person name="Carty H.A."/>
            <person name="Umayam L.A."/>
            <person name="Haft D.H."/>
            <person name="Peterson J.D."/>
            <person name="Beanan M.J."/>
            <person name="White O."/>
            <person name="Salzberg S.L."/>
            <person name="Hsia R.-C."/>
            <person name="McClarty G."/>
            <person name="Rank R.G."/>
            <person name="Bavoil P.M."/>
            <person name="Fraser C.M."/>
        </authorList>
    </citation>
    <scope>NUCLEOTIDE SEQUENCE [LARGE SCALE GENOMIC DNA]</scope>
    <source>
        <strain>ATCC VR-813 / DSM 19441 / 03DC25 / GPIC</strain>
    </source>
</reference>
<feature type="chain" id="PRO_0000303320" description="tRNA N6-adenosine threonylcarbamoyltransferase">
    <location>
        <begin position="1"/>
        <end position="344"/>
    </location>
</feature>
<feature type="binding site" evidence="1">
    <location>
        <position position="110"/>
    </location>
    <ligand>
        <name>Fe cation</name>
        <dbReference type="ChEBI" id="CHEBI:24875"/>
    </ligand>
</feature>
<feature type="binding site" evidence="1">
    <location>
        <position position="114"/>
    </location>
    <ligand>
        <name>Fe cation</name>
        <dbReference type="ChEBI" id="CHEBI:24875"/>
    </ligand>
</feature>
<feature type="binding site" evidence="1">
    <location>
        <begin position="133"/>
        <end position="137"/>
    </location>
    <ligand>
        <name>substrate</name>
    </ligand>
</feature>
<feature type="binding site" evidence="1">
    <location>
        <position position="166"/>
    </location>
    <ligand>
        <name>substrate</name>
    </ligand>
</feature>
<feature type="binding site" evidence="1">
    <location>
        <position position="179"/>
    </location>
    <ligand>
        <name>substrate</name>
    </ligand>
</feature>
<feature type="binding site" evidence="1">
    <location>
        <position position="278"/>
    </location>
    <ligand>
        <name>substrate</name>
    </ligand>
</feature>
<feature type="binding site" evidence="1">
    <location>
        <position position="303"/>
    </location>
    <ligand>
        <name>Fe cation</name>
        <dbReference type="ChEBI" id="CHEBI:24875"/>
    </ligand>
</feature>
<proteinExistence type="inferred from homology"/>
<accession>Q822Y4</accession>
<protein>
    <recommendedName>
        <fullName evidence="1">tRNA N6-adenosine threonylcarbamoyltransferase</fullName>
        <ecNumber evidence="1">2.3.1.234</ecNumber>
    </recommendedName>
    <alternativeName>
        <fullName evidence="1">N6-L-threonylcarbamoyladenine synthase</fullName>
        <shortName evidence="1">t(6)A synthase</shortName>
    </alternativeName>
    <alternativeName>
        <fullName evidence="1">t(6)A37 threonylcarbamoyladenosine biosynthesis protein TsaD</fullName>
    </alternativeName>
    <alternativeName>
        <fullName evidence="1">tRNA threonylcarbamoyladenosine biosynthesis protein TsaD</fullName>
    </alternativeName>
</protein>
<evidence type="ECO:0000255" key="1">
    <source>
        <dbReference type="HAMAP-Rule" id="MF_01445"/>
    </source>
</evidence>
<gene>
    <name evidence="1" type="primary">tsaD</name>
    <name type="synonym">gcp</name>
    <name type="ordered locus">CCA_00542</name>
</gene>